<feature type="chain" id="PRO_0000265387" description="Small ribosomal subunit protein uS19">
    <location>
        <begin position="1"/>
        <end position="95"/>
    </location>
</feature>
<protein>
    <recommendedName>
        <fullName evidence="1">Small ribosomal subunit protein uS19</fullName>
    </recommendedName>
    <alternativeName>
        <fullName evidence="2">30S ribosomal protein S19</fullName>
    </alternativeName>
</protein>
<gene>
    <name evidence="1" type="primary">rpsS</name>
    <name type="ordered locus">MXAN_3303</name>
</gene>
<reference key="1">
    <citation type="journal article" date="2006" name="Proc. Natl. Acad. Sci. U.S.A.">
        <title>Evolution of sensory complexity recorded in a myxobacterial genome.</title>
        <authorList>
            <person name="Goldman B.S."/>
            <person name="Nierman W.C."/>
            <person name="Kaiser D."/>
            <person name="Slater S.C."/>
            <person name="Durkin A.S."/>
            <person name="Eisen J.A."/>
            <person name="Ronning C.M."/>
            <person name="Barbazuk W.B."/>
            <person name="Blanchard M."/>
            <person name="Field C."/>
            <person name="Halling C."/>
            <person name="Hinkle G."/>
            <person name="Iartchuk O."/>
            <person name="Kim H.S."/>
            <person name="Mackenzie C."/>
            <person name="Madupu R."/>
            <person name="Miller N."/>
            <person name="Shvartsbeyn A."/>
            <person name="Sullivan S.A."/>
            <person name="Vaudin M."/>
            <person name="Wiegand R."/>
            <person name="Kaplan H.B."/>
        </authorList>
    </citation>
    <scope>NUCLEOTIDE SEQUENCE [LARGE SCALE GENOMIC DNA]</scope>
    <source>
        <strain>DK1622</strain>
    </source>
</reference>
<keyword id="KW-1185">Reference proteome</keyword>
<keyword id="KW-0687">Ribonucleoprotein</keyword>
<keyword id="KW-0689">Ribosomal protein</keyword>
<keyword id="KW-0694">RNA-binding</keyword>
<keyword id="KW-0699">rRNA-binding</keyword>
<dbReference type="EMBL" id="CP000113">
    <property type="protein sequence ID" value="ABF89115.1"/>
    <property type="molecule type" value="Genomic_DNA"/>
</dbReference>
<dbReference type="RefSeq" id="WP_002633604.1">
    <property type="nucleotide sequence ID" value="NC_008095.1"/>
</dbReference>
<dbReference type="SMR" id="Q1D771"/>
<dbReference type="STRING" id="246197.MXAN_3303"/>
<dbReference type="EnsemblBacteria" id="ABF89115">
    <property type="protein sequence ID" value="ABF89115"/>
    <property type="gene ID" value="MXAN_3303"/>
</dbReference>
<dbReference type="GeneID" id="41360656"/>
<dbReference type="KEGG" id="mxa:MXAN_3303"/>
<dbReference type="eggNOG" id="COG0185">
    <property type="taxonomic scope" value="Bacteria"/>
</dbReference>
<dbReference type="HOGENOM" id="CLU_144911_0_1_7"/>
<dbReference type="OrthoDB" id="9797833at2"/>
<dbReference type="Proteomes" id="UP000002402">
    <property type="component" value="Chromosome"/>
</dbReference>
<dbReference type="GO" id="GO:0005737">
    <property type="term" value="C:cytoplasm"/>
    <property type="evidence" value="ECO:0007669"/>
    <property type="project" value="UniProtKB-ARBA"/>
</dbReference>
<dbReference type="GO" id="GO:0015935">
    <property type="term" value="C:small ribosomal subunit"/>
    <property type="evidence" value="ECO:0007669"/>
    <property type="project" value="InterPro"/>
</dbReference>
<dbReference type="GO" id="GO:0019843">
    <property type="term" value="F:rRNA binding"/>
    <property type="evidence" value="ECO:0007669"/>
    <property type="project" value="UniProtKB-UniRule"/>
</dbReference>
<dbReference type="GO" id="GO:0003735">
    <property type="term" value="F:structural constituent of ribosome"/>
    <property type="evidence" value="ECO:0007669"/>
    <property type="project" value="InterPro"/>
</dbReference>
<dbReference type="GO" id="GO:0000028">
    <property type="term" value="P:ribosomal small subunit assembly"/>
    <property type="evidence" value="ECO:0007669"/>
    <property type="project" value="TreeGrafter"/>
</dbReference>
<dbReference type="GO" id="GO:0006412">
    <property type="term" value="P:translation"/>
    <property type="evidence" value="ECO:0007669"/>
    <property type="project" value="UniProtKB-UniRule"/>
</dbReference>
<dbReference type="FunFam" id="3.30.860.10:FF:000001">
    <property type="entry name" value="30S ribosomal protein S19"/>
    <property type="match status" value="1"/>
</dbReference>
<dbReference type="Gene3D" id="3.30.860.10">
    <property type="entry name" value="30s Ribosomal Protein S19, Chain A"/>
    <property type="match status" value="1"/>
</dbReference>
<dbReference type="HAMAP" id="MF_00531">
    <property type="entry name" value="Ribosomal_uS19"/>
    <property type="match status" value="1"/>
</dbReference>
<dbReference type="InterPro" id="IPR002222">
    <property type="entry name" value="Ribosomal_uS19"/>
</dbReference>
<dbReference type="InterPro" id="IPR005732">
    <property type="entry name" value="Ribosomal_uS19_bac-type"/>
</dbReference>
<dbReference type="InterPro" id="IPR020934">
    <property type="entry name" value="Ribosomal_uS19_CS"/>
</dbReference>
<dbReference type="InterPro" id="IPR023575">
    <property type="entry name" value="Ribosomal_uS19_SF"/>
</dbReference>
<dbReference type="NCBIfam" id="TIGR01050">
    <property type="entry name" value="rpsS_bact"/>
    <property type="match status" value="1"/>
</dbReference>
<dbReference type="PANTHER" id="PTHR11880">
    <property type="entry name" value="RIBOSOMAL PROTEIN S19P FAMILY MEMBER"/>
    <property type="match status" value="1"/>
</dbReference>
<dbReference type="PANTHER" id="PTHR11880:SF8">
    <property type="entry name" value="SMALL RIBOSOMAL SUBUNIT PROTEIN US19M"/>
    <property type="match status" value="1"/>
</dbReference>
<dbReference type="Pfam" id="PF00203">
    <property type="entry name" value="Ribosomal_S19"/>
    <property type="match status" value="1"/>
</dbReference>
<dbReference type="PIRSF" id="PIRSF002144">
    <property type="entry name" value="Ribosomal_S19"/>
    <property type="match status" value="1"/>
</dbReference>
<dbReference type="PRINTS" id="PR00975">
    <property type="entry name" value="RIBOSOMALS19"/>
</dbReference>
<dbReference type="SUPFAM" id="SSF54570">
    <property type="entry name" value="Ribosomal protein S19"/>
    <property type="match status" value="1"/>
</dbReference>
<dbReference type="PROSITE" id="PS00323">
    <property type="entry name" value="RIBOSOMAL_S19"/>
    <property type="match status" value="1"/>
</dbReference>
<organism>
    <name type="scientific">Myxococcus xanthus (strain DK1622)</name>
    <dbReference type="NCBI Taxonomy" id="246197"/>
    <lineage>
        <taxon>Bacteria</taxon>
        <taxon>Pseudomonadati</taxon>
        <taxon>Myxococcota</taxon>
        <taxon>Myxococcia</taxon>
        <taxon>Myxococcales</taxon>
        <taxon>Cystobacterineae</taxon>
        <taxon>Myxococcaceae</taxon>
        <taxon>Myxococcus</taxon>
    </lineage>
</organism>
<comment type="function">
    <text evidence="1">Protein S19 forms a complex with S13 that binds strongly to the 16S ribosomal RNA.</text>
</comment>
<comment type="similarity">
    <text evidence="1">Belongs to the universal ribosomal protein uS19 family.</text>
</comment>
<accession>Q1D771</accession>
<sequence length="95" mass="10596">MARSIKKGPFVDDFLVKKIEDMIKTNKKAVVKTWSRRSTILPEFVGHTFAVHNGKKFIPVFVTENMVGHKLGEFAPTRTFGGHSAEKKVAKAPGK</sequence>
<proteinExistence type="inferred from homology"/>
<evidence type="ECO:0000255" key="1">
    <source>
        <dbReference type="HAMAP-Rule" id="MF_00531"/>
    </source>
</evidence>
<evidence type="ECO:0000305" key="2"/>
<name>RS19_MYXXD</name>